<sequence length="403" mass="45216">MTESTFPQYPRLILSKGREKSLLRRHPWVFSGAVSRLEGKANLGETIDIVDHQGKWLARGAWSPASQIRARVWTFDKAESIDIAFFTRRLRQAQQWRDWLAKKDGLDSYRLIAGESDGLPGVTIDRFGHFLVLQLLSAGAEYQRAALISALQTCYPDCAIYDRSDVAVRKKEGMALTQGPVTGELPPALLPIEEYGMKLLVDIQGGHKTGYYLDQRDSRLATRRYVENQRVLNCFSYTGGFAVSALMGGCRQVVSVDTSQDALDIARQNVELNQLDLSKAEFVRDDVFKLLRAYREHGEKFDVIIMDPPKFVENKSQLMGACRGYKDINMLAIQLLNPGGILLTFSCSGLMTSDLFQKIIADAAIDAGRDVQFIEQFRQAADHPVIATYPEGLYLKGFACRVM</sequence>
<protein>
    <recommendedName>
        <fullName evidence="1">Ribosomal RNA large subunit methyltransferase I</fullName>
        <ecNumber evidence="1">2.1.1.191</ecNumber>
    </recommendedName>
    <alternativeName>
        <fullName evidence="1">23S rRNA m5C1962 methyltransferase</fullName>
    </alternativeName>
    <alternativeName>
        <fullName evidence="1">rRNA (cytosine-C(5)-)-methyltransferase RlmI</fullName>
    </alternativeName>
</protein>
<name>RLMI_SALPC</name>
<feature type="chain" id="PRO_1000188700" description="Ribosomal RNA large subunit methyltransferase I">
    <location>
        <begin position="1"/>
        <end position="403"/>
    </location>
</feature>
<feature type="domain" description="PUA" evidence="1">
    <location>
        <begin position="9"/>
        <end position="88"/>
    </location>
</feature>
<proteinExistence type="inferred from homology"/>
<accession>C0Q8C5</accession>
<keyword id="KW-0963">Cytoplasm</keyword>
<keyword id="KW-0489">Methyltransferase</keyword>
<keyword id="KW-0694">RNA-binding</keyword>
<keyword id="KW-0698">rRNA processing</keyword>
<keyword id="KW-0949">S-adenosyl-L-methionine</keyword>
<keyword id="KW-0808">Transferase</keyword>
<gene>
    <name evidence="1" type="primary">rlmI</name>
    <name type="ordered locus">SPC_2669</name>
</gene>
<comment type="function">
    <text evidence="1">Specifically methylates the cytosine at position 1962 (m5C1962) of 23S rRNA.</text>
</comment>
<comment type="catalytic activity">
    <reaction evidence="1">
        <text>cytidine(1962) in 23S rRNA + S-adenosyl-L-methionine = 5-methylcytidine(1962) in 23S rRNA + S-adenosyl-L-homocysteine + H(+)</text>
        <dbReference type="Rhea" id="RHEA:42912"/>
        <dbReference type="Rhea" id="RHEA-COMP:10382"/>
        <dbReference type="Rhea" id="RHEA-COMP:10386"/>
        <dbReference type="ChEBI" id="CHEBI:15378"/>
        <dbReference type="ChEBI" id="CHEBI:57856"/>
        <dbReference type="ChEBI" id="CHEBI:59789"/>
        <dbReference type="ChEBI" id="CHEBI:74483"/>
        <dbReference type="ChEBI" id="CHEBI:82748"/>
        <dbReference type="EC" id="2.1.1.191"/>
    </reaction>
</comment>
<comment type="subcellular location">
    <subcellularLocation>
        <location evidence="1">Cytoplasm</location>
    </subcellularLocation>
</comment>
<comment type="similarity">
    <text evidence="1">Belongs to the methyltransferase superfamily. RlmI family.</text>
</comment>
<dbReference type="EC" id="2.1.1.191" evidence="1"/>
<dbReference type="EMBL" id="CP000857">
    <property type="protein sequence ID" value="ACN46770.1"/>
    <property type="molecule type" value="Genomic_DNA"/>
</dbReference>
<dbReference type="RefSeq" id="WP_000140474.1">
    <property type="nucleotide sequence ID" value="NC_012125.1"/>
</dbReference>
<dbReference type="SMR" id="C0Q8C5"/>
<dbReference type="KEGG" id="sei:SPC_2669"/>
<dbReference type="HOGENOM" id="CLU_014042_0_0_6"/>
<dbReference type="Proteomes" id="UP000001599">
    <property type="component" value="Chromosome"/>
</dbReference>
<dbReference type="GO" id="GO:0005737">
    <property type="term" value="C:cytoplasm"/>
    <property type="evidence" value="ECO:0007669"/>
    <property type="project" value="UniProtKB-SubCell"/>
</dbReference>
<dbReference type="GO" id="GO:0003723">
    <property type="term" value="F:RNA binding"/>
    <property type="evidence" value="ECO:0007669"/>
    <property type="project" value="UniProtKB-KW"/>
</dbReference>
<dbReference type="GO" id="GO:0016434">
    <property type="term" value="F:rRNA (cytosine) methyltransferase activity"/>
    <property type="evidence" value="ECO:0007669"/>
    <property type="project" value="UniProtKB-UniRule"/>
</dbReference>
<dbReference type="CDD" id="cd02440">
    <property type="entry name" value="AdoMet_MTases"/>
    <property type="match status" value="1"/>
</dbReference>
<dbReference type="CDD" id="cd21153">
    <property type="entry name" value="PUA_RlmI"/>
    <property type="match status" value="1"/>
</dbReference>
<dbReference type="CDD" id="cd11572">
    <property type="entry name" value="RlmI_M_like"/>
    <property type="match status" value="1"/>
</dbReference>
<dbReference type="FunFam" id="3.40.50.150:FF:000044">
    <property type="entry name" value="Ribosomal RNA large subunit methyltransferase I"/>
    <property type="match status" value="1"/>
</dbReference>
<dbReference type="Gene3D" id="2.30.130.10">
    <property type="entry name" value="PUA domain"/>
    <property type="match status" value="1"/>
</dbReference>
<dbReference type="Gene3D" id="3.30.750.80">
    <property type="entry name" value="RNA methyltransferase domain (HRMD) like"/>
    <property type="match status" value="1"/>
</dbReference>
<dbReference type="Gene3D" id="3.40.50.150">
    <property type="entry name" value="Vaccinia Virus protein VP39"/>
    <property type="match status" value="1"/>
</dbReference>
<dbReference type="HAMAP" id="MF_01857">
    <property type="entry name" value="23SrRNA_methyltr_I"/>
    <property type="match status" value="1"/>
</dbReference>
<dbReference type="InterPro" id="IPR002478">
    <property type="entry name" value="PUA"/>
</dbReference>
<dbReference type="InterPro" id="IPR015947">
    <property type="entry name" value="PUA-like_sf"/>
</dbReference>
<dbReference type="InterPro" id="IPR036974">
    <property type="entry name" value="PUA_sf"/>
</dbReference>
<dbReference type="InterPro" id="IPR023542">
    <property type="entry name" value="RLMI"/>
</dbReference>
<dbReference type="InterPro" id="IPR041532">
    <property type="entry name" value="RlmI-like_PUA"/>
</dbReference>
<dbReference type="InterPro" id="IPR019614">
    <property type="entry name" value="SAM-dep_methyl-trfase"/>
</dbReference>
<dbReference type="InterPro" id="IPR029063">
    <property type="entry name" value="SAM-dependent_MTases_sf"/>
</dbReference>
<dbReference type="NCBIfam" id="NF011707">
    <property type="entry name" value="PRK15128.1"/>
    <property type="match status" value="1"/>
</dbReference>
<dbReference type="PANTHER" id="PTHR42873">
    <property type="entry name" value="RIBOSOMAL RNA LARGE SUBUNIT METHYLTRANSFERASE"/>
    <property type="match status" value="1"/>
</dbReference>
<dbReference type="PANTHER" id="PTHR42873:SF1">
    <property type="entry name" value="S-ADENOSYLMETHIONINE-DEPENDENT METHYLTRANSFERASE DOMAIN-CONTAINING PROTEIN"/>
    <property type="match status" value="1"/>
</dbReference>
<dbReference type="Pfam" id="PF10672">
    <property type="entry name" value="Methyltrans_SAM"/>
    <property type="match status" value="1"/>
</dbReference>
<dbReference type="Pfam" id="PF17785">
    <property type="entry name" value="PUA_3"/>
    <property type="match status" value="1"/>
</dbReference>
<dbReference type="SMART" id="SM00359">
    <property type="entry name" value="PUA"/>
    <property type="match status" value="1"/>
</dbReference>
<dbReference type="SUPFAM" id="SSF88697">
    <property type="entry name" value="PUA domain-like"/>
    <property type="match status" value="1"/>
</dbReference>
<dbReference type="SUPFAM" id="SSF53335">
    <property type="entry name" value="S-adenosyl-L-methionine-dependent methyltransferases"/>
    <property type="match status" value="1"/>
</dbReference>
<dbReference type="PROSITE" id="PS50890">
    <property type="entry name" value="PUA"/>
    <property type="match status" value="1"/>
</dbReference>
<evidence type="ECO:0000255" key="1">
    <source>
        <dbReference type="HAMAP-Rule" id="MF_01857"/>
    </source>
</evidence>
<organism>
    <name type="scientific">Salmonella paratyphi C (strain RKS4594)</name>
    <dbReference type="NCBI Taxonomy" id="476213"/>
    <lineage>
        <taxon>Bacteria</taxon>
        <taxon>Pseudomonadati</taxon>
        <taxon>Pseudomonadota</taxon>
        <taxon>Gammaproteobacteria</taxon>
        <taxon>Enterobacterales</taxon>
        <taxon>Enterobacteriaceae</taxon>
        <taxon>Salmonella</taxon>
    </lineage>
</organism>
<reference key="1">
    <citation type="journal article" date="2009" name="PLoS ONE">
        <title>Salmonella paratyphi C: genetic divergence from Salmonella choleraesuis and pathogenic convergence with Salmonella typhi.</title>
        <authorList>
            <person name="Liu W.-Q."/>
            <person name="Feng Y."/>
            <person name="Wang Y."/>
            <person name="Zou Q.-H."/>
            <person name="Chen F."/>
            <person name="Guo J.-T."/>
            <person name="Peng Y.-H."/>
            <person name="Jin Y."/>
            <person name="Li Y.-G."/>
            <person name="Hu S.-N."/>
            <person name="Johnston R.N."/>
            <person name="Liu G.-R."/>
            <person name="Liu S.-L."/>
        </authorList>
    </citation>
    <scope>NUCLEOTIDE SEQUENCE [LARGE SCALE GENOMIC DNA]</scope>
    <source>
        <strain>RKS4594</strain>
    </source>
</reference>